<accession>Q6GHL1</accession>
<protein>
    <recommendedName>
        <fullName evidence="1">Large ribosomal subunit protein bL28</fullName>
    </recommendedName>
    <alternativeName>
        <fullName evidence="3">50S ribosomal protein L28</fullName>
    </alternativeName>
</protein>
<organism>
    <name type="scientific">Staphylococcus aureus (strain MRSA252)</name>
    <dbReference type="NCBI Taxonomy" id="282458"/>
    <lineage>
        <taxon>Bacteria</taxon>
        <taxon>Bacillati</taxon>
        <taxon>Bacillota</taxon>
        <taxon>Bacilli</taxon>
        <taxon>Bacillales</taxon>
        <taxon>Staphylococcaceae</taxon>
        <taxon>Staphylococcus</taxon>
    </lineage>
</organism>
<feature type="chain" id="PRO_0000178551" description="Large ribosomal subunit protein bL28">
    <location>
        <begin position="1"/>
        <end position="62"/>
    </location>
</feature>
<feature type="region of interest" description="Disordered" evidence="2">
    <location>
        <begin position="1"/>
        <end position="22"/>
    </location>
</feature>
<gene>
    <name evidence="1" type="primary">rpmB</name>
    <name type="ordered locus">SAR1200</name>
</gene>
<reference key="1">
    <citation type="journal article" date="2004" name="Proc. Natl. Acad. Sci. U.S.A.">
        <title>Complete genomes of two clinical Staphylococcus aureus strains: evidence for the rapid evolution of virulence and drug resistance.</title>
        <authorList>
            <person name="Holden M.T.G."/>
            <person name="Feil E.J."/>
            <person name="Lindsay J.A."/>
            <person name="Peacock S.J."/>
            <person name="Day N.P.J."/>
            <person name="Enright M.C."/>
            <person name="Foster T.J."/>
            <person name="Moore C.E."/>
            <person name="Hurst L."/>
            <person name="Atkin R."/>
            <person name="Barron A."/>
            <person name="Bason N."/>
            <person name="Bentley S.D."/>
            <person name="Chillingworth C."/>
            <person name="Chillingworth T."/>
            <person name="Churcher C."/>
            <person name="Clark L."/>
            <person name="Corton C."/>
            <person name="Cronin A."/>
            <person name="Doggett J."/>
            <person name="Dowd L."/>
            <person name="Feltwell T."/>
            <person name="Hance Z."/>
            <person name="Harris B."/>
            <person name="Hauser H."/>
            <person name="Holroyd S."/>
            <person name="Jagels K."/>
            <person name="James K.D."/>
            <person name="Lennard N."/>
            <person name="Line A."/>
            <person name="Mayes R."/>
            <person name="Moule S."/>
            <person name="Mungall K."/>
            <person name="Ormond D."/>
            <person name="Quail M.A."/>
            <person name="Rabbinowitsch E."/>
            <person name="Rutherford K.M."/>
            <person name="Sanders M."/>
            <person name="Sharp S."/>
            <person name="Simmonds M."/>
            <person name="Stevens K."/>
            <person name="Whitehead S."/>
            <person name="Barrell B.G."/>
            <person name="Spratt B.G."/>
            <person name="Parkhill J."/>
        </authorList>
    </citation>
    <scope>NUCLEOTIDE SEQUENCE [LARGE SCALE GENOMIC DNA]</scope>
    <source>
        <strain>MRSA252</strain>
    </source>
</reference>
<proteinExistence type="inferred from homology"/>
<comment type="similarity">
    <text evidence="1">Belongs to the bacterial ribosomal protein bL28 family.</text>
</comment>
<sequence length="62" mass="6977">MGKQCFVTGRKASTGNRRSHALNSTKRRWNANLQKVRILVDGKPKKVWVSARALKSGKVTRV</sequence>
<dbReference type="EMBL" id="BX571856">
    <property type="protein sequence ID" value="CAG40202.1"/>
    <property type="molecule type" value="Genomic_DNA"/>
</dbReference>
<dbReference type="RefSeq" id="WP_000517908.1">
    <property type="nucleotide sequence ID" value="NC_002952.2"/>
</dbReference>
<dbReference type="SMR" id="Q6GHL1"/>
<dbReference type="GeneID" id="98345539"/>
<dbReference type="KEGG" id="sar:SAR1200"/>
<dbReference type="HOGENOM" id="CLU_064548_7_1_9"/>
<dbReference type="Proteomes" id="UP000000596">
    <property type="component" value="Chromosome"/>
</dbReference>
<dbReference type="GO" id="GO:1990904">
    <property type="term" value="C:ribonucleoprotein complex"/>
    <property type="evidence" value="ECO:0007669"/>
    <property type="project" value="UniProtKB-KW"/>
</dbReference>
<dbReference type="GO" id="GO:0005840">
    <property type="term" value="C:ribosome"/>
    <property type="evidence" value="ECO:0007669"/>
    <property type="project" value="UniProtKB-KW"/>
</dbReference>
<dbReference type="GO" id="GO:0003735">
    <property type="term" value="F:structural constituent of ribosome"/>
    <property type="evidence" value="ECO:0007669"/>
    <property type="project" value="InterPro"/>
</dbReference>
<dbReference type="GO" id="GO:0006412">
    <property type="term" value="P:translation"/>
    <property type="evidence" value="ECO:0007669"/>
    <property type="project" value="UniProtKB-UniRule"/>
</dbReference>
<dbReference type="Gene3D" id="2.30.170.40">
    <property type="entry name" value="Ribosomal protein L28/L24"/>
    <property type="match status" value="1"/>
</dbReference>
<dbReference type="HAMAP" id="MF_00373">
    <property type="entry name" value="Ribosomal_bL28"/>
    <property type="match status" value="1"/>
</dbReference>
<dbReference type="InterPro" id="IPR050096">
    <property type="entry name" value="Bacterial_rp_bL28"/>
</dbReference>
<dbReference type="InterPro" id="IPR026569">
    <property type="entry name" value="Ribosomal_bL28"/>
</dbReference>
<dbReference type="InterPro" id="IPR034704">
    <property type="entry name" value="Ribosomal_bL28/bL31-like_sf"/>
</dbReference>
<dbReference type="InterPro" id="IPR001383">
    <property type="entry name" value="Ribosomal_bL28_bact-type"/>
</dbReference>
<dbReference type="InterPro" id="IPR037147">
    <property type="entry name" value="Ribosomal_bL28_sf"/>
</dbReference>
<dbReference type="NCBIfam" id="TIGR00009">
    <property type="entry name" value="L28"/>
    <property type="match status" value="1"/>
</dbReference>
<dbReference type="PANTHER" id="PTHR39080">
    <property type="entry name" value="50S RIBOSOMAL PROTEIN L28"/>
    <property type="match status" value="1"/>
</dbReference>
<dbReference type="PANTHER" id="PTHR39080:SF1">
    <property type="entry name" value="LARGE RIBOSOMAL SUBUNIT PROTEIN BL28A"/>
    <property type="match status" value="1"/>
</dbReference>
<dbReference type="Pfam" id="PF00830">
    <property type="entry name" value="Ribosomal_L28"/>
    <property type="match status" value="1"/>
</dbReference>
<dbReference type="SUPFAM" id="SSF143800">
    <property type="entry name" value="L28p-like"/>
    <property type="match status" value="1"/>
</dbReference>
<name>RL28_STAAR</name>
<keyword id="KW-0687">Ribonucleoprotein</keyword>
<keyword id="KW-0689">Ribosomal protein</keyword>
<evidence type="ECO:0000255" key="1">
    <source>
        <dbReference type="HAMAP-Rule" id="MF_00373"/>
    </source>
</evidence>
<evidence type="ECO:0000256" key="2">
    <source>
        <dbReference type="SAM" id="MobiDB-lite"/>
    </source>
</evidence>
<evidence type="ECO:0000305" key="3"/>